<protein>
    <recommendedName>
        <fullName evidence="1">tRNA modification GTPase MnmE</fullName>
        <ecNumber evidence="1">3.6.-.-</ecNumber>
    </recommendedName>
</protein>
<comment type="function">
    <text evidence="1">Exhibits a very high intrinsic GTPase hydrolysis rate. Involved in the addition of a carboxymethylaminomethyl (cmnm) group at the wobble position (U34) of certain tRNAs, forming tRNA-cmnm(5)s(2)U34.</text>
</comment>
<comment type="cofactor">
    <cofactor evidence="1">
        <name>K(+)</name>
        <dbReference type="ChEBI" id="CHEBI:29103"/>
    </cofactor>
    <text evidence="1">Binds 1 potassium ion per subunit.</text>
</comment>
<comment type="subunit">
    <text evidence="1">Homodimer. Heterotetramer of two MnmE and two MnmG subunits.</text>
</comment>
<comment type="subcellular location">
    <subcellularLocation>
        <location evidence="1">Cytoplasm</location>
    </subcellularLocation>
</comment>
<comment type="similarity">
    <text evidence="1">Belongs to the TRAFAC class TrmE-Era-EngA-EngB-Septin-like GTPase superfamily. TrmE GTPase family.</text>
</comment>
<sequence>MSHNDTIVAQATPPGRGGVGILRISGLKARDVAQEVLGKLPKPRYADYLPFKDVDGSALDQGIALWFPGPNSFTGEDVLELQGHGGPVILDLLLKRILTLPGVRIARPGEFSERAFLNDKLDLAQAEAIADLIDASSEQAARSALNSLQGAFSARVNHLVEALTHLRIYVEAAIDFPDEEIDFLSDGKIEAQLNGVIADLDAVRTEARQGSLLREGMKVVIAGRPNAGKSSLLNALAGREAAIVTDIAGTTRDVLREHIHIDGMPLHIIDTAGLRDASDEVERIGIERAWQEIEQADRVLFMVDGTTTDAVDPADIWPDFIARLPKNLPITVVRNKADITGETLGISEVNGHSLVRLSARTGEGVDVLRNHLKQSMGFDTNMEGGFLARRRHLQALAEAAEHLEQGKAQLLGAWAGELLAEELRLAQQSLSEITGEFTSDDLLGRIFSSFCIGK</sequence>
<organism>
    <name type="scientific">Salmonella schwarzengrund (strain CVM19633)</name>
    <dbReference type="NCBI Taxonomy" id="439843"/>
    <lineage>
        <taxon>Bacteria</taxon>
        <taxon>Pseudomonadati</taxon>
        <taxon>Pseudomonadota</taxon>
        <taxon>Gammaproteobacteria</taxon>
        <taxon>Enterobacterales</taxon>
        <taxon>Enterobacteriaceae</taxon>
        <taxon>Salmonella</taxon>
    </lineage>
</organism>
<reference key="1">
    <citation type="journal article" date="2011" name="J. Bacteriol.">
        <title>Comparative genomics of 28 Salmonella enterica isolates: evidence for CRISPR-mediated adaptive sublineage evolution.</title>
        <authorList>
            <person name="Fricke W.F."/>
            <person name="Mammel M.K."/>
            <person name="McDermott P.F."/>
            <person name="Tartera C."/>
            <person name="White D.G."/>
            <person name="Leclerc J.E."/>
            <person name="Ravel J."/>
            <person name="Cebula T.A."/>
        </authorList>
    </citation>
    <scope>NUCLEOTIDE SEQUENCE [LARGE SCALE GENOMIC DNA]</scope>
    <source>
        <strain>CVM19633</strain>
    </source>
</reference>
<feature type="chain" id="PRO_1000197064" description="tRNA modification GTPase MnmE">
    <location>
        <begin position="1"/>
        <end position="454"/>
    </location>
</feature>
<feature type="domain" description="TrmE-type G">
    <location>
        <begin position="216"/>
        <end position="377"/>
    </location>
</feature>
<feature type="binding site" evidence="1">
    <location>
        <position position="23"/>
    </location>
    <ligand>
        <name>(6S)-5-formyl-5,6,7,8-tetrahydrofolate</name>
        <dbReference type="ChEBI" id="CHEBI:57457"/>
    </ligand>
</feature>
<feature type="binding site" evidence="1">
    <location>
        <position position="80"/>
    </location>
    <ligand>
        <name>(6S)-5-formyl-5,6,7,8-tetrahydrofolate</name>
        <dbReference type="ChEBI" id="CHEBI:57457"/>
    </ligand>
</feature>
<feature type="binding site" evidence="1">
    <location>
        <position position="120"/>
    </location>
    <ligand>
        <name>(6S)-5-formyl-5,6,7,8-tetrahydrofolate</name>
        <dbReference type="ChEBI" id="CHEBI:57457"/>
    </ligand>
</feature>
<feature type="binding site" evidence="1">
    <location>
        <begin position="226"/>
        <end position="231"/>
    </location>
    <ligand>
        <name>GTP</name>
        <dbReference type="ChEBI" id="CHEBI:37565"/>
    </ligand>
</feature>
<feature type="binding site" evidence="1">
    <location>
        <position position="226"/>
    </location>
    <ligand>
        <name>K(+)</name>
        <dbReference type="ChEBI" id="CHEBI:29103"/>
    </ligand>
</feature>
<feature type="binding site" evidence="1">
    <location>
        <position position="230"/>
    </location>
    <ligand>
        <name>Mg(2+)</name>
        <dbReference type="ChEBI" id="CHEBI:18420"/>
    </ligand>
</feature>
<feature type="binding site" evidence="1">
    <location>
        <begin position="245"/>
        <end position="251"/>
    </location>
    <ligand>
        <name>GTP</name>
        <dbReference type="ChEBI" id="CHEBI:37565"/>
    </ligand>
</feature>
<feature type="binding site" evidence="1">
    <location>
        <position position="245"/>
    </location>
    <ligand>
        <name>K(+)</name>
        <dbReference type="ChEBI" id="CHEBI:29103"/>
    </ligand>
</feature>
<feature type="binding site" evidence="1">
    <location>
        <position position="247"/>
    </location>
    <ligand>
        <name>K(+)</name>
        <dbReference type="ChEBI" id="CHEBI:29103"/>
    </ligand>
</feature>
<feature type="binding site" evidence="1">
    <location>
        <position position="250"/>
    </location>
    <ligand>
        <name>K(+)</name>
        <dbReference type="ChEBI" id="CHEBI:29103"/>
    </ligand>
</feature>
<feature type="binding site" evidence="1">
    <location>
        <position position="251"/>
    </location>
    <ligand>
        <name>Mg(2+)</name>
        <dbReference type="ChEBI" id="CHEBI:18420"/>
    </ligand>
</feature>
<feature type="binding site" evidence="1">
    <location>
        <begin position="270"/>
        <end position="273"/>
    </location>
    <ligand>
        <name>GTP</name>
        <dbReference type="ChEBI" id="CHEBI:37565"/>
    </ligand>
</feature>
<feature type="binding site" evidence="1">
    <location>
        <begin position="335"/>
        <end position="338"/>
    </location>
    <ligand>
        <name>GTP</name>
        <dbReference type="ChEBI" id="CHEBI:37565"/>
    </ligand>
</feature>
<feature type="binding site" evidence="1">
    <location>
        <begin position="358"/>
        <end position="360"/>
    </location>
    <ligand>
        <name>GTP</name>
        <dbReference type="ChEBI" id="CHEBI:37565"/>
    </ligand>
</feature>
<feature type="binding site" evidence="1">
    <location>
        <position position="454"/>
    </location>
    <ligand>
        <name>(6S)-5-formyl-5,6,7,8-tetrahydrofolate</name>
        <dbReference type="ChEBI" id="CHEBI:57457"/>
    </ligand>
</feature>
<gene>
    <name evidence="1" type="primary">mnmE</name>
    <name evidence="1" type="synonym">trmE</name>
    <name type="ordered locus">SeSA_A4055</name>
</gene>
<accession>B4TN11</accession>
<keyword id="KW-0963">Cytoplasm</keyword>
<keyword id="KW-0342">GTP-binding</keyword>
<keyword id="KW-0378">Hydrolase</keyword>
<keyword id="KW-0460">Magnesium</keyword>
<keyword id="KW-0479">Metal-binding</keyword>
<keyword id="KW-0547">Nucleotide-binding</keyword>
<keyword id="KW-0630">Potassium</keyword>
<keyword id="KW-0819">tRNA processing</keyword>
<evidence type="ECO:0000255" key="1">
    <source>
        <dbReference type="HAMAP-Rule" id="MF_00379"/>
    </source>
</evidence>
<proteinExistence type="inferred from homology"/>
<name>MNME_SALSV</name>
<dbReference type="EC" id="3.6.-.-" evidence="1"/>
<dbReference type="EMBL" id="CP001127">
    <property type="protein sequence ID" value="ACF91219.1"/>
    <property type="molecule type" value="Genomic_DNA"/>
</dbReference>
<dbReference type="RefSeq" id="WP_000019081.1">
    <property type="nucleotide sequence ID" value="NC_011094.1"/>
</dbReference>
<dbReference type="SMR" id="B4TN11"/>
<dbReference type="KEGG" id="sew:SeSA_A4055"/>
<dbReference type="HOGENOM" id="CLU_019624_4_1_6"/>
<dbReference type="Proteomes" id="UP000001865">
    <property type="component" value="Chromosome"/>
</dbReference>
<dbReference type="GO" id="GO:0005829">
    <property type="term" value="C:cytosol"/>
    <property type="evidence" value="ECO:0007669"/>
    <property type="project" value="TreeGrafter"/>
</dbReference>
<dbReference type="GO" id="GO:0005525">
    <property type="term" value="F:GTP binding"/>
    <property type="evidence" value="ECO:0007669"/>
    <property type="project" value="UniProtKB-UniRule"/>
</dbReference>
<dbReference type="GO" id="GO:0003924">
    <property type="term" value="F:GTPase activity"/>
    <property type="evidence" value="ECO:0007669"/>
    <property type="project" value="UniProtKB-UniRule"/>
</dbReference>
<dbReference type="GO" id="GO:0046872">
    <property type="term" value="F:metal ion binding"/>
    <property type="evidence" value="ECO:0007669"/>
    <property type="project" value="UniProtKB-KW"/>
</dbReference>
<dbReference type="GO" id="GO:0030488">
    <property type="term" value="P:tRNA methylation"/>
    <property type="evidence" value="ECO:0007669"/>
    <property type="project" value="TreeGrafter"/>
</dbReference>
<dbReference type="GO" id="GO:0002098">
    <property type="term" value="P:tRNA wobble uridine modification"/>
    <property type="evidence" value="ECO:0007669"/>
    <property type="project" value="TreeGrafter"/>
</dbReference>
<dbReference type="CDD" id="cd04164">
    <property type="entry name" value="trmE"/>
    <property type="match status" value="1"/>
</dbReference>
<dbReference type="CDD" id="cd14858">
    <property type="entry name" value="TrmE_N"/>
    <property type="match status" value="1"/>
</dbReference>
<dbReference type="FunFam" id="3.30.1360.120:FF:000001">
    <property type="entry name" value="tRNA modification GTPase MnmE"/>
    <property type="match status" value="1"/>
</dbReference>
<dbReference type="FunFam" id="3.40.50.300:FF:000249">
    <property type="entry name" value="tRNA modification GTPase MnmE"/>
    <property type="match status" value="1"/>
</dbReference>
<dbReference type="Gene3D" id="3.40.50.300">
    <property type="entry name" value="P-loop containing nucleotide triphosphate hydrolases"/>
    <property type="match status" value="1"/>
</dbReference>
<dbReference type="Gene3D" id="3.30.1360.120">
    <property type="entry name" value="Probable tRNA modification gtpase trme, domain 1"/>
    <property type="match status" value="1"/>
</dbReference>
<dbReference type="Gene3D" id="1.20.120.430">
    <property type="entry name" value="tRNA modification GTPase MnmE domain 2"/>
    <property type="match status" value="1"/>
</dbReference>
<dbReference type="HAMAP" id="MF_00379">
    <property type="entry name" value="GTPase_MnmE"/>
    <property type="match status" value="1"/>
</dbReference>
<dbReference type="InterPro" id="IPR031168">
    <property type="entry name" value="G_TrmE"/>
</dbReference>
<dbReference type="InterPro" id="IPR006073">
    <property type="entry name" value="GTP-bd"/>
</dbReference>
<dbReference type="InterPro" id="IPR018948">
    <property type="entry name" value="GTP-bd_TrmE_N"/>
</dbReference>
<dbReference type="InterPro" id="IPR004520">
    <property type="entry name" value="GTPase_MnmE"/>
</dbReference>
<dbReference type="InterPro" id="IPR027368">
    <property type="entry name" value="MnmE_dom2"/>
</dbReference>
<dbReference type="InterPro" id="IPR025867">
    <property type="entry name" value="MnmE_helical"/>
</dbReference>
<dbReference type="InterPro" id="IPR027417">
    <property type="entry name" value="P-loop_NTPase"/>
</dbReference>
<dbReference type="InterPro" id="IPR005225">
    <property type="entry name" value="Small_GTP-bd"/>
</dbReference>
<dbReference type="InterPro" id="IPR027266">
    <property type="entry name" value="TrmE/GcvT_dom1"/>
</dbReference>
<dbReference type="NCBIfam" id="TIGR00450">
    <property type="entry name" value="mnmE_trmE_thdF"/>
    <property type="match status" value="1"/>
</dbReference>
<dbReference type="NCBIfam" id="NF003661">
    <property type="entry name" value="PRK05291.1-3"/>
    <property type="match status" value="1"/>
</dbReference>
<dbReference type="NCBIfam" id="TIGR00231">
    <property type="entry name" value="small_GTP"/>
    <property type="match status" value="1"/>
</dbReference>
<dbReference type="PANTHER" id="PTHR42714">
    <property type="entry name" value="TRNA MODIFICATION GTPASE GTPBP3"/>
    <property type="match status" value="1"/>
</dbReference>
<dbReference type="PANTHER" id="PTHR42714:SF2">
    <property type="entry name" value="TRNA MODIFICATION GTPASE GTPBP3, MITOCHONDRIAL"/>
    <property type="match status" value="1"/>
</dbReference>
<dbReference type="Pfam" id="PF01926">
    <property type="entry name" value="MMR_HSR1"/>
    <property type="match status" value="1"/>
</dbReference>
<dbReference type="Pfam" id="PF12631">
    <property type="entry name" value="MnmE_helical"/>
    <property type="match status" value="1"/>
</dbReference>
<dbReference type="Pfam" id="PF10396">
    <property type="entry name" value="TrmE_N"/>
    <property type="match status" value="1"/>
</dbReference>
<dbReference type="SUPFAM" id="SSF52540">
    <property type="entry name" value="P-loop containing nucleoside triphosphate hydrolases"/>
    <property type="match status" value="1"/>
</dbReference>
<dbReference type="SUPFAM" id="SSF116878">
    <property type="entry name" value="TrmE connector domain"/>
    <property type="match status" value="1"/>
</dbReference>
<dbReference type="PROSITE" id="PS51709">
    <property type="entry name" value="G_TRME"/>
    <property type="match status" value="1"/>
</dbReference>